<reference key="1">
    <citation type="journal article" date="2006" name="J. Bacteriol.">
        <title>Chromosome rearrangement and diversification of Francisella tularensis revealed by the type B (OSU18) genome sequence.</title>
        <authorList>
            <person name="Petrosino J.F."/>
            <person name="Xiang Q."/>
            <person name="Karpathy S.E."/>
            <person name="Jiang H."/>
            <person name="Yerrapragada S."/>
            <person name="Liu Y."/>
            <person name="Gioia J."/>
            <person name="Hemphill L."/>
            <person name="Gonzalez A."/>
            <person name="Raghavan T.M."/>
            <person name="Uzman A."/>
            <person name="Fox G.E."/>
            <person name="Highlander S."/>
            <person name="Reichard M."/>
            <person name="Morton R.J."/>
            <person name="Clinkenbeard K.D."/>
            <person name="Weinstock G.M."/>
        </authorList>
    </citation>
    <scope>NUCLEOTIDE SEQUENCE [LARGE SCALE GENOMIC DNA]</scope>
    <source>
        <strain>OSU18</strain>
    </source>
</reference>
<protein>
    <recommendedName>
        <fullName evidence="1">Polyribonucleotide nucleotidyltransferase</fullName>
        <ecNumber evidence="1">2.7.7.8</ecNumber>
    </recommendedName>
    <alternativeName>
        <fullName evidence="1">Polynucleotide phosphorylase</fullName>
        <shortName evidence="1">PNPase</shortName>
    </alternativeName>
</protein>
<accession>Q0BKU1</accession>
<dbReference type="EC" id="2.7.7.8" evidence="1"/>
<dbReference type="EMBL" id="CP000437">
    <property type="protein sequence ID" value="ABI83293.1"/>
    <property type="molecule type" value="Genomic_DNA"/>
</dbReference>
<dbReference type="RefSeq" id="WP_011648757.1">
    <property type="nucleotide sequence ID" value="NC_017463.1"/>
</dbReference>
<dbReference type="SMR" id="Q0BKU1"/>
<dbReference type="KEGG" id="fth:FTH_1487"/>
<dbReference type="GO" id="GO:0005829">
    <property type="term" value="C:cytosol"/>
    <property type="evidence" value="ECO:0007669"/>
    <property type="project" value="TreeGrafter"/>
</dbReference>
<dbReference type="GO" id="GO:0000175">
    <property type="term" value="F:3'-5'-RNA exonuclease activity"/>
    <property type="evidence" value="ECO:0007669"/>
    <property type="project" value="TreeGrafter"/>
</dbReference>
<dbReference type="GO" id="GO:0000287">
    <property type="term" value="F:magnesium ion binding"/>
    <property type="evidence" value="ECO:0007669"/>
    <property type="project" value="UniProtKB-UniRule"/>
</dbReference>
<dbReference type="GO" id="GO:0004654">
    <property type="term" value="F:polyribonucleotide nucleotidyltransferase activity"/>
    <property type="evidence" value="ECO:0007669"/>
    <property type="project" value="UniProtKB-UniRule"/>
</dbReference>
<dbReference type="GO" id="GO:0003723">
    <property type="term" value="F:RNA binding"/>
    <property type="evidence" value="ECO:0007669"/>
    <property type="project" value="UniProtKB-UniRule"/>
</dbReference>
<dbReference type="GO" id="GO:0006402">
    <property type="term" value="P:mRNA catabolic process"/>
    <property type="evidence" value="ECO:0007669"/>
    <property type="project" value="UniProtKB-UniRule"/>
</dbReference>
<dbReference type="GO" id="GO:0006396">
    <property type="term" value="P:RNA processing"/>
    <property type="evidence" value="ECO:0007669"/>
    <property type="project" value="InterPro"/>
</dbReference>
<dbReference type="CDD" id="cd02393">
    <property type="entry name" value="KH-I_PNPase"/>
    <property type="match status" value="1"/>
</dbReference>
<dbReference type="CDD" id="cd11363">
    <property type="entry name" value="RNase_PH_PNPase_1"/>
    <property type="match status" value="1"/>
</dbReference>
<dbReference type="CDD" id="cd11364">
    <property type="entry name" value="RNase_PH_PNPase_2"/>
    <property type="match status" value="1"/>
</dbReference>
<dbReference type="FunFam" id="3.30.1370.10:FF:000001">
    <property type="entry name" value="Polyribonucleotide nucleotidyltransferase"/>
    <property type="match status" value="1"/>
</dbReference>
<dbReference type="FunFam" id="3.30.230.70:FF:000001">
    <property type="entry name" value="Polyribonucleotide nucleotidyltransferase"/>
    <property type="match status" value="1"/>
</dbReference>
<dbReference type="FunFam" id="3.30.230.70:FF:000002">
    <property type="entry name" value="Polyribonucleotide nucleotidyltransferase"/>
    <property type="match status" value="1"/>
</dbReference>
<dbReference type="Gene3D" id="3.30.230.70">
    <property type="entry name" value="GHMP Kinase, N-terminal domain"/>
    <property type="match status" value="2"/>
</dbReference>
<dbReference type="Gene3D" id="3.30.1370.10">
    <property type="entry name" value="K Homology domain, type 1"/>
    <property type="match status" value="1"/>
</dbReference>
<dbReference type="Gene3D" id="2.40.50.140">
    <property type="entry name" value="Nucleic acid-binding proteins"/>
    <property type="match status" value="1"/>
</dbReference>
<dbReference type="HAMAP" id="MF_01595">
    <property type="entry name" value="PNPase"/>
    <property type="match status" value="1"/>
</dbReference>
<dbReference type="InterPro" id="IPR001247">
    <property type="entry name" value="ExoRNase_PH_dom1"/>
</dbReference>
<dbReference type="InterPro" id="IPR015847">
    <property type="entry name" value="ExoRNase_PH_dom2"/>
</dbReference>
<dbReference type="InterPro" id="IPR036345">
    <property type="entry name" value="ExoRNase_PH_dom2_sf"/>
</dbReference>
<dbReference type="InterPro" id="IPR004087">
    <property type="entry name" value="KH_dom"/>
</dbReference>
<dbReference type="InterPro" id="IPR004088">
    <property type="entry name" value="KH_dom_type_1"/>
</dbReference>
<dbReference type="InterPro" id="IPR036612">
    <property type="entry name" value="KH_dom_type_1_sf"/>
</dbReference>
<dbReference type="InterPro" id="IPR012340">
    <property type="entry name" value="NA-bd_OB-fold"/>
</dbReference>
<dbReference type="InterPro" id="IPR012162">
    <property type="entry name" value="PNPase"/>
</dbReference>
<dbReference type="InterPro" id="IPR027408">
    <property type="entry name" value="PNPase/RNase_PH_dom_sf"/>
</dbReference>
<dbReference type="InterPro" id="IPR015848">
    <property type="entry name" value="PNPase_PH_RNA-bd_bac/org-type"/>
</dbReference>
<dbReference type="InterPro" id="IPR036456">
    <property type="entry name" value="PNPase_PH_RNA-bd_sf"/>
</dbReference>
<dbReference type="InterPro" id="IPR020568">
    <property type="entry name" value="Ribosomal_Su5_D2-typ_SF"/>
</dbReference>
<dbReference type="InterPro" id="IPR003029">
    <property type="entry name" value="S1_domain"/>
</dbReference>
<dbReference type="NCBIfam" id="TIGR03591">
    <property type="entry name" value="polynuc_phos"/>
    <property type="match status" value="1"/>
</dbReference>
<dbReference type="NCBIfam" id="NF008805">
    <property type="entry name" value="PRK11824.1"/>
    <property type="match status" value="1"/>
</dbReference>
<dbReference type="PANTHER" id="PTHR11252">
    <property type="entry name" value="POLYRIBONUCLEOTIDE NUCLEOTIDYLTRANSFERASE"/>
    <property type="match status" value="1"/>
</dbReference>
<dbReference type="PANTHER" id="PTHR11252:SF0">
    <property type="entry name" value="POLYRIBONUCLEOTIDE NUCLEOTIDYLTRANSFERASE 1, MITOCHONDRIAL"/>
    <property type="match status" value="1"/>
</dbReference>
<dbReference type="Pfam" id="PF00013">
    <property type="entry name" value="KH_1"/>
    <property type="match status" value="1"/>
</dbReference>
<dbReference type="Pfam" id="PF03726">
    <property type="entry name" value="PNPase"/>
    <property type="match status" value="1"/>
</dbReference>
<dbReference type="Pfam" id="PF01138">
    <property type="entry name" value="RNase_PH"/>
    <property type="match status" value="2"/>
</dbReference>
<dbReference type="Pfam" id="PF03725">
    <property type="entry name" value="RNase_PH_C"/>
    <property type="match status" value="2"/>
</dbReference>
<dbReference type="Pfam" id="PF00575">
    <property type="entry name" value="S1"/>
    <property type="match status" value="1"/>
</dbReference>
<dbReference type="PIRSF" id="PIRSF005499">
    <property type="entry name" value="PNPase"/>
    <property type="match status" value="1"/>
</dbReference>
<dbReference type="SMART" id="SM00322">
    <property type="entry name" value="KH"/>
    <property type="match status" value="1"/>
</dbReference>
<dbReference type="SMART" id="SM00316">
    <property type="entry name" value="S1"/>
    <property type="match status" value="1"/>
</dbReference>
<dbReference type="SUPFAM" id="SSF54791">
    <property type="entry name" value="Eukaryotic type KH-domain (KH-domain type I)"/>
    <property type="match status" value="1"/>
</dbReference>
<dbReference type="SUPFAM" id="SSF50249">
    <property type="entry name" value="Nucleic acid-binding proteins"/>
    <property type="match status" value="1"/>
</dbReference>
<dbReference type="SUPFAM" id="SSF46915">
    <property type="entry name" value="Polynucleotide phosphorylase/guanosine pentaphosphate synthase (PNPase/GPSI), domain 3"/>
    <property type="match status" value="1"/>
</dbReference>
<dbReference type="SUPFAM" id="SSF55666">
    <property type="entry name" value="Ribonuclease PH domain 2-like"/>
    <property type="match status" value="2"/>
</dbReference>
<dbReference type="SUPFAM" id="SSF54211">
    <property type="entry name" value="Ribosomal protein S5 domain 2-like"/>
    <property type="match status" value="2"/>
</dbReference>
<dbReference type="PROSITE" id="PS50084">
    <property type="entry name" value="KH_TYPE_1"/>
    <property type="match status" value="1"/>
</dbReference>
<dbReference type="PROSITE" id="PS50126">
    <property type="entry name" value="S1"/>
    <property type="match status" value="1"/>
</dbReference>
<name>PNP_FRATO</name>
<evidence type="ECO:0000255" key="1">
    <source>
        <dbReference type="HAMAP-Rule" id="MF_01595"/>
    </source>
</evidence>
<gene>
    <name evidence="1" type="primary">pnp</name>
    <name type="ordered locus">FTH_1487</name>
</gene>
<sequence length="693" mass="75528">MKIFREVFELGNKEIILETGGMARQADGSVTVSCGNNVVLVTTVVKKSVADGTDFFPLSVHYLEKTYAAGKIPGGFLRREGRPSEEQILISRLIDRSIRPSFPDGFFNEIQIVATVLSYDGAFSPDILALIGASASLAISGAPYDDVVAGVRVGYTNGKYILNPNKQDLRDSDLDLVVSGTYDAILMVESEANSLPESVMLGGILYAHKHLKTIINSINRLAKVASKPRIEYSIYQINKFLKSQIKSQFFGEIKNTYTIALKQERNLKLNAIRKNVLEYIFSSDVDGNEYTEKEILEAFHDIEKDLVRSNILEGKPRIDGRCTETIRPINVKIGVLPGVHGSALFTRGETQALVVTTLGSDRDAQLVESLDGIEKCRYMLHYNFPPYSVGECGMVGMAPKRREIGHANLAKRATQAVFPNEEAYPYVVRVVSEILESNGSSSMATVCGSSLSMMDAGVPIAEPVAGIAMGLIKDGAKYAVLSDILGDEDHLGDMDFKVAGTRYGVTALQMDIKIKGISREILEQALEQARVGRLHILGIMNEVIKEHKEAVSDVAPQIHVMNINPAKIKDVVGRGGATVKGIVEKTGAQIDTSDSGEVKVFAKDKKSMDMAVAMIEEIVAEVEEGQVYKGKIVKLLDSGVFVNLLGSQDGYLPFSEIEQAGMKTNSLVEGQGLEVLVQNIDRGGRVKLSLVAR</sequence>
<proteinExistence type="inferred from homology"/>
<comment type="function">
    <text evidence="1">Involved in mRNA degradation. Catalyzes the phosphorolysis of single-stranded polyribonucleotides processively in the 3'- to 5'-direction.</text>
</comment>
<comment type="catalytic activity">
    <reaction evidence="1">
        <text>RNA(n+1) + phosphate = RNA(n) + a ribonucleoside 5'-diphosphate</text>
        <dbReference type="Rhea" id="RHEA:22096"/>
        <dbReference type="Rhea" id="RHEA-COMP:14527"/>
        <dbReference type="Rhea" id="RHEA-COMP:17342"/>
        <dbReference type="ChEBI" id="CHEBI:43474"/>
        <dbReference type="ChEBI" id="CHEBI:57930"/>
        <dbReference type="ChEBI" id="CHEBI:140395"/>
        <dbReference type="EC" id="2.7.7.8"/>
    </reaction>
</comment>
<comment type="cofactor">
    <cofactor evidence="1">
        <name>Mg(2+)</name>
        <dbReference type="ChEBI" id="CHEBI:18420"/>
    </cofactor>
</comment>
<comment type="subunit">
    <text evidence="1">Component of the RNA degradosome, which is a multiprotein complex involved in RNA processing and mRNA degradation.</text>
</comment>
<comment type="subcellular location">
    <subcellularLocation>
        <location evidence="1">Cytoplasm</location>
    </subcellularLocation>
</comment>
<comment type="similarity">
    <text evidence="1">Belongs to the polyribonucleotide nucleotidyltransferase family.</text>
</comment>
<feature type="chain" id="PRO_0000329651" description="Polyribonucleotide nucleotidyltransferase">
    <location>
        <begin position="1"/>
        <end position="693"/>
    </location>
</feature>
<feature type="domain" description="KH" evidence="1">
    <location>
        <begin position="556"/>
        <end position="615"/>
    </location>
</feature>
<feature type="domain" description="S1 motif" evidence="1">
    <location>
        <begin position="625"/>
        <end position="693"/>
    </location>
</feature>
<feature type="binding site" evidence="1">
    <location>
        <position position="489"/>
    </location>
    <ligand>
        <name>Mg(2+)</name>
        <dbReference type="ChEBI" id="CHEBI:18420"/>
    </ligand>
</feature>
<feature type="binding site" evidence="1">
    <location>
        <position position="495"/>
    </location>
    <ligand>
        <name>Mg(2+)</name>
        <dbReference type="ChEBI" id="CHEBI:18420"/>
    </ligand>
</feature>
<keyword id="KW-0963">Cytoplasm</keyword>
<keyword id="KW-0460">Magnesium</keyword>
<keyword id="KW-0479">Metal-binding</keyword>
<keyword id="KW-0548">Nucleotidyltransferase</keyword>
<keyword id="KW-0694">RNA-binding</keyword>
<keyword id="KW-0808">Transferase</keyword>
<organism>
    <name type="scientific">Francisella tularensis subsp. holarctica (strain OSU18)</name>
    <dbReference type="NCBI Taxonomy" id="393011"/>
    <lineage>
        <taxon>Bacteria</taxon>
        <taxon>Pseudomonadati</taxon>
        <taxon>Pseudomonadota</taxon>
        <taxon>Gammaproteobacteria</taxon>
        <taxon>Thiotrichales</taxon>
        <taxon>Francisellaceae</taxon>
        <taxon>Francisella</taxon>
    </lineage>
</organism>